<gene>
    <name evidence="1" type="primary">rlmG</name>
    <name type="ordered locus">VFMJ11_0743</name>
</gene>
<proteinExistence type="inferred from homology"/>
<protein>
    <recommendedName>
        <fullName evidence="1">Ribosomal RNA large subunit methyltransferase G</fullName>
        <ecNumber evidence="1">2.1.1.174</ecNumber>
    </recommendedName>
    <alternativeName>
        <fullName evidence="1">23S rRNA m2G1835 methyltransferase</fullName>
    </alternativeName>
    <alternativeName>
        <fullName evidence="1">rRNA (guanine-N(2)-)-methyltransferase RlmG</fullName>
    </alternativeName>
</protein>
<feature type="chain" id="PRO_0000366533" description="Ribosomal RNA large subunit methyltransferase G">
    <location>
        <begin position="1"/>
        <end position="382"/>
    </location>
</feature>
<sequence>MKTELSLLDRSLNLQRYPKRAQELLQAWDAGDEYIIKYVEEELNLEDGKNILILNDNFGALSCWFSDKHNVTMMTDSFVSQRGTLKNLQRNQCNRVQLITSTEEMPQGFDLVLMQIPKNNRMLTWQLQQLRQSMDSSCPIIAVNKAKEIHSSTLELFEDYLGETKTSLAWKKHRLVFSNANASNPKTIAEAVCWSVDNEDIDLLNYPNVYSGEKLDQGARFMLEHIPSDPELRHIIDLGCGNGVLSVKAGQLNPEARITCVDESFMAVESARRNLEVNLGKERQFQFIANNCLDGFKKHSSYLVLCNPPFHQGQAITDHIAWQMFCDAKHILCKDGKLLVIGNRHLDYDGKLCRLFGEENVTTVASNSKFVILEAVKAEKSK</sequence>
<organism>
    <name type="scientific">Aliivibrio fischeri (strain MJ11)</name>
    <name type="common">Vibrio fischeri</name>
    <dbReference type="NCBI Taxonomy" id="388396"/>
    <lineage>
        <taxon>Bacteria</taxon>
        <taxon>Pseudomonadati</taxon>
        <taxon>Pseudomonadota</taxon>
        <taxon>Gammaproteobacteria</taxon>
        <taxon>Vibrionales</taxon>
        <taxon>Vibrionaceae</taxon>
        <taxon>Aliivibrio</taxon>
    </lineage>
</organism>
<evidence type="ECO:0000255" key="1">
    <source>
        <dbReference type="HAMAP-Rule" id="MF_01859"/>
    </source>
</evidence>
<keyword id="KW-0963">Cytoplasm</keyword>
<keyword id="KW-0489">Methyltransferase</keyword>
<keyword id="KW-0698">rRNA processing</keyword>
<keyword id="KW-0949">S-adenosyl-L-methionine</keyword>
<keyword id="KW-0808">Transferase</keyword>
<reference key="1">
    <citation type="submission" date="2008-08" db="EMBL/GenBank/DDBJ databases">
        <title>Complete sequence of Vibrio fischeri strain MJ11.</title>
        <authorList>
            <person name="Mandel M.J."/>
            <person name="Stabb E.V."/>
            <person name="Ruby E.G."/>
            <person name="Ferriera S."/>
            <person name="Johnson J."/>
            <person name="Kravitz S."/>
            <person name="Beeson K."/>
            <person name="Sutton G."/>
            <person name="Rogers Y.-H."/>
            <person name="Friedman R."/>
            <person name="Frazier M."/>
            <person name="Venter J.C."/>
        </authorList>
    </citation>
    <scope>NUCLEOTIDE SEQUENCE [LARGE SCALE GENOMIC DNA]</scope>
    <source>
        <strain>MJ11</strain>
    </source>
</reference>
<dbReference type="EC" id="2.1.1.174" evidence="1"/>
<dbReference type="EMBL" id="CP001139">
    <property type="protein sequence ID" value="ACH66233.1"/>
    <property type="molecule type" value="Genomic_DNA"/>
</dbReference>
<dbReference type="RefSeq" id="WP_012533587.1">
    <property type="nucleotide sequence ID" value="NC_011184.1"/>
</dbReference>
<dbReference type="SMR" id="B5FBH8"/>
<dbReference type="KEGG" id="vfm:VFMJ11_0743"/>
<dbReference type="HOGENOM" id="CLU_040288_4_0_6"/>
<dbReference type="Proteomes" id="UP000001857">
    <property type="component" value="Chromosome I"/>
</dbReference>
<dbReference type="GO" id="GO:0005737">
    <property type="term" value="C:cytoplasm"/>
    <property type="evidence" value="ECO:0007669"/>
    <property type="project" value="UniProtKB-SubCell"/>
</dbReference>
<dbReference type="GO" id="GO:0052916">
    <property type="term" value="F:23S rRNA (guanine(1835)-N(2))-methyltransferase activity"/>
    <property type="evidence" value="ECO:0007669"/>
    <property type="project" value="UniProtKB-EC"/>
</dbReference>
<dbReference type="CDD" id="cd02440">
    <property type="entry name" value="AdoMet_MTases"/>
    <property type="match status" value="1"/>
</dbReference>
<dbReference type="Gene3D" id="3.40.50.150">
    <property type="entry name" value="Vaccinia Virus protein VP39"/>
    <property type="match status" value="2"/>
</dbReference>
<dbReference type="HAMAP" id="MF_01859">
    <property type="entry name" value="23SrRNA_methyltr_G"/>
    <property type="match status" value="1"/>
</dbReference>
<dbReference type="InterPro" id="IPR017237">
    <property type="entry name" value="rRNA_m2G-MeTrfase_RlmG"/>
</dbReference>
<dbReference type="InterPro" id="IPR046977">
    <property type="entry name" value="RsmC/RlmG"/>
</dbReference>
<dbReference type="InterPro" id="IPR029063">
    <property type="entry name" value="SAM-dependent_MTases_sf"/>
</dbReference>
<dbReference type="InterPro" id="IPR007848">
    <property type="entry name" value="Small_mtfrase_dom"/>
</dbReference>
<dbReference type="PANTHER" id="PTHR47816:SF5">
    <property type="entry name" value="RIBOSOMAL RNA LARGE SUBUNIT METHYLTRANSFERASE G"/>
    <property type="match status" value="1"/>
</dbReference>
<dbReference type="PANTHER" id="PTHR47816">
    <property type="entry name" value="RIBOSOMAL RNA SMALL SUBUNIT METHYLTRANSFERASE C"/>
    <property type="match status" value="1"/>
</dbReference>
<dbReference type="Pfam" id="PF05175">
    <property type="entry name" value="MTS"/>
    <property type="match status" value="1"/>
</dbReference>
<dbReference type="PIRSF" id="PIRSF037565">
    <property type="entry name" value="RRNA_m2G_Mtase_RsmD_prd"/>
    <property type="match status" value="1"/>
</dbReference>
<dbReference type="SUPFAM" id="SSF53335">
    <property type="entry name" value="S-adenosyl-L-methionine-dependent methyltransferases"/>
    <property type="match status" value="1"/>
</dbReference>
<comment type="function">
    <text evidence="1">Specifically methylates the guanine in position 1835 (m2G1835) of 23S rRNA.</text>
</comment>
<comment type="catalytic activity">
    <reaction evidence="1">
        <text>guanosine(1835) in 23S rRNA + S-adenosyl-L-methionine = N(2)-methylguanosine(1835) in 23S rRNA + S-adenosyl-L-homocysteine + H(+)</text>
        <dbReference type="Rhea" id="RHEA:42744"/>
        <dbReference type="Rhea" id="RHEA-COMP:10217"/>
        <dbReference type="Rhea" id="RHEA-COMP:10218"/>
        <dbReference type="ChEBI" id="CHEBI:15378"/>
        <dbReference type="ChEBI" id="CHEBI:57856"/>
        <dbReference type="ChEBI" id="CHEBI:59789"/>
        <dbReference type="ChEBI" id="CHEBI:74269"/>
        <dbReference type="ChEBI" id="CHEBI:74481"/>
        <dbReference type="EC" id="2.1.1.174"/>
    </reaction>
</comment>
<comment type="subcellular location">
    <subcellularLocation>
        <location evidence="1">Cytoplasm</location>
    </subcellularLocation>
</comment>
<comment type="similarity">
    <text evidence="1">Belongs to the methyltransferase superfamily. RlmG family.</text>
</comment>
<name>RLMG_ALIFM</name>
<accession>B5FBH8</accession>